<reference key="1">
    <citation type="submission" date="2004-11" db="EMBL/GenBank/DDBJ databases">
        <authorList>
            <consortium name="The German cDNA consortium"/>
        </authorList>
    </citation>
    <scope>NUCLEOTIDE SEQUENCE [LARGE SCALE MRNA]</scope>
    <source>
        <tissue>Kidney</tissue>
    </source>
</reference>
<name>P3C2A_PONAB</name>
<evidence type="ECO:0000250" key="1">
    <source>
        <dbReference type="UniProtKB" id="O00443"/>
    </source>
</evidence>
<evidence type="ECO:0000250" key="2">
    <source>
        <dbReference type="UniProtKB" id="Q61194"/>
    </source>
</evidence>
<evidence type="ECO:0000255" key="3">
    <source>
        <dbReference type="PROSITE-ProRule" id="PRU00041"/>
    </source>
</evidence>
<evidence type="ECO:0000255" key="4">
    <source>
        <dbReference type="PROSITE-ProRule" id="PRU00147"/>
    </source>
</evidence>
<evidence type="ECO:0000255" key="5">
    <source>
        <dbReference type="PROSITE-ProRule" id="PRU00269"/>
    </source>
</evidence>
<evidence type="ECO:0000255" key="6">
    <source>
        <dbReference type="PROSITE-ProRule" id="PRU00878"/>
    </source>
</evidence>
<evidence type="ECO:0000255" key="7">
    <source>
        <dbReference type="PROSITE-ProRule" id="PRU00879"/>
    </source>
</evidence>
<evidence type="ECO:0000255" key="8">
    <source>
        <dbReference type="PROSITE-ProRule" id="PRU00880"/>
    </source>
</evidence>
<evidence type="ECO:0000256" key="9">
    <source>
        <dbReference type="SAM" id="MobiDB-lite"/>
    </source>
</evidence>
<organism>
    <name type="scientific">Pongo abelii</name>
    <name type="common">Sumatran orangutan</name>
    <name type="synonym">Pongo pygmaeus abelii</name>
    <dbReference type="NCBI Taxonomy" id="9601"/>
    <lineage>
        <taxon>Eukaryota</taxon>
        <taxon>Metazoa</taxon>
        <taxon>Chordata</taxon>
        <taxon>Craniata</taxon>
        <taxon>Vertebrata</taxon>
        <taxon>Euteleostomi</taxon>
        <taxon>Mammalia</taxon>
        <taxon>Eutheria</taxon>
        <taxon>Euarchontoglires</taxon>
        <taxon>Primates</taxon>
        <taxon>Haplorrhini</taxon>
        <taxon>Catarrhini</taxon>
        <taxon>Hominidae</taxon>
        <taxon>Pongo</taxon>
    </lineage>
</organism>
<feature type="initiator methionine" description="Removed" evidence="1">
    <location>
        <position position="1"/>
    </location>
</feature>
<feature type="chain" id="PRO_0000088797" description="Phosphatidylinositol 4-phosphate 3-kinase C2 domain-containing subunit alpha">
    <location>
        <begin position="2"/>
        <end position="1685"/>
    </location>
</feature>
<feature type="domain" description="PI3K-RBD" evidence="7">
    <location>
        <begin position="419"/>
        <end position="507"/>
    </location>
</feature>
<feature type="domain" description="C2 PI3K-type" evidence="3 8">
    <location>
        <begin position="680"/>
        <end position="839"/>
    </location>
</feature>
<feature type="domain" description="PIK helical" evidence="6">
    <location>
        <begin position="859"/>
        <end position="1035"/>
    </location>
</feature>
<feature type="domain" description="PI3K/PI4K catalytic" evidence="5">
    <location>
        <begin position="1103"/>
        <end position="1381"/>
    </location>
</feature>
<feature type="domain" description="PX" evidence="4">
    <location>
        <begin position="1420"/>
        <end position="1536"/>
    </location>
</feature>
<feature type="domain" description="C2" evidence="3">
    <location>
        <begin position="1554"/>
        <end position="1677"/>
    </location>
</feature>
<feature type="region of interest" description="Disordered" evidence="9">
    <location>
        <begin position="1"/>
        <end position="33"/>
    </location>
</feature>
<feature type="region of interest" description="Interaction with clathrin; sufficient to induce clathrin assembly" evidence="1">
    <location>
        <begin position="2"/>
        <end position="142"/>
    </location>
</feature>
<feature type="region of interest" description="Disordered" evidence="9">
    <location>
        <begin position="41"/>
        <end position="60"/>
    </location>
</feature>
<feature type="region of interest" description="G-loop" evidence="5">
    <location>
        <begin position="1109"/>
        <end position="1115"/>
    </location>
</feature>
<feature type="region of interest" description="Catalytic loop" evidence="5">
    <location>
        <begin position="1245"/>
        <end position="1253"/>
    </location>
</feature>
<feature type="region of interest" description="Activation loop" evidence="5">
    <location>
        <begin position="1264"/>
        <end position="1290"/>
    </location>
</feature>
<feature type="region of interest" description="Interaction with PtdIns(4,5)P2-containing membranes" evidence="2">
    <location>
        <begin position="1486"/>
        <end position="1491"/>
    </location>
</feature>
<feature type="short sequence motif" description="Nuclear localization signal" evidence="1">
    <location>
        <begin position="1607"/>
        <end position="1618"/>
    </location>
</feature>
<feature type="compositionally biased region" description="Basic and acidic residues" evidence="9">
    <location>
        <begin position="19"/>
        <end position="31"/>
    </location>
</feature>
<feature type="compositionally biased region" description="Polar residues" evidence="9">
    <location>
        <begin position="49"/>
        <end position="60"/>
    </location>
</feature>
<feature type="modified residue" description="N-acetylalanine" evidence="1">
    <location>
        <position position="2"/>
    </location>
</feature>
<feature type="modified residue" description="Phosphoserine" evidence="1">
    <location>
        <position position="60"/>
    </location>
</feature>
<feature type="modified residue" description="Phosphoserine" evidence="1">
    <location>
        <position position="108"/>
    </location>
</feature>
<feature type="modified residue" description="Phosphoserine" evidence="1">
    <location>
        <position position="259"/>
    </location>
</feature>
<feature type="modified residue" description="Phosphoserine" evidence="1">
    <location>
        <position position="327"/>
    </location>
</feature>
<feature type="modified residue" description="Phosphoserine" evidence="1">
    <location>
        <position position="338"/>
    </location>
</feature>
<feature type="modified residue" description="Phosphoserine" evidence="1">
    <location>
        <position position="628"/>
    </location>
</feature>
<feature type="modified residue" description="Phosphoserine" evidence="1">
    <location>
        <position position="1551"/>
    </location>
</feature>
<comment type="function">
    <text evidence="1 2">Generates phosphatidylinositol 3-phosphate (PtdIns3P) and phosphatidylinositol 3,4-bisphosphate (PtdIns(3,4)P2) that act as second messengers. Has a role in several intracellular trafficking events. Functions in insulin signaling and secretion. Required for translocation of the glucose transporter SLC2A4/GLUT4 to the plasma membrane and glucose uptake in response to insulin-mediated RHOQ activation. Regulates insulin secretion through two different mechanisms: involved in glucose-induced insulin secretion downstream of insulin receptor in a pathway that involves AKT1 activation and TBC1D4/AS160 phosphorylation, and participates in the late step of insulin granule exocytosis probably in insulin granule fusion. Synthesizes PtdIns3P in response to insulin signaling. Functions in clathrin-coated endocytic vesicle formation and distribution. Regulates dynamin-independent endocytosis, probably by recruiting EEA1 to internalizing vesicles. In neurosecretory cells synthesizes PtdIns3P on large dense core vesicles. Participates in calcium induced contraction of vascular smooth muscle by regulating myosin light chain (MLC) phosphorylation through a mechanism involving Rho kinase-dependent phosphorylation of the MLCP-regulatory subunit MYPT1. May play a role in the EGF signaling cascade. May be involved in mitosis and UV-induced damage response. Required for maintenance of normal renal structure and function by supporting normal podocyte function (By similarity). Involved in the regulation of ciliogenesis and trafficking of ciliary components (By similarity).</text>
</comment>
<comment type="catalytic activity">
    <reaction evidence="1">
        <text>a 1,2-diacyl-sn-glycero-3-phospho-(1D-myo-inositol 4-phosphate) + ATP = a 1,2-diacyl-sn-glycero-3-phospho-(1D-myo-inositol-3,4-bisphosphate) + ADP + H(+)</text>
        <dbReference type="Rhea" id="RHEA:18373"/>
        <dbReference type="ChEBI" id="CHEBI:15378"/>
        <dbReference type="ChEBI" id="CHEBI:30616"/>
        <dbReference type="ChEBI" id="CHEBI:57658"/>
        <dbReference type="ChEBI" id="CHEBI:58178"/>
        <dbReference type="ChEBI" id="CHEBI:456216"/>
        <dbReference type="EC" id="2.7.1.154"/>
    </reaction>
    <physiologicalReaction direction="left-to-right" evidence="1">
        <dbReference type="Rhea" id="RHEA:18374"/>
    </physiologicalReaction>
</comment>
<comment type="catalytic activity">
    <reaction evidence="1">
        <text>a 1,2-diacyl-sn-glycero-3-phospho-(1D-myo-inositol) + ATP = a 1,2-diacyl-sn-glycero-3-phospho-(1D-myo-inositol-3-phosphate) + ADP + H(+)</text>
        <dbReference type="Rhea" id="RHEA:12709"/>
        <dbReference type="ChEBI" id="CHEBI:15378"/>
        <dbReference type="ChEBI" id="CHEBI:30616"/>
        <dbReference type="ChEBI" id="CHEBI:57880"/>
        <dbReference type="ChEBI" id="CHEBI:58088"/>
        <dbReference type="ChEBI" id="CHEBI:456216"/>
        <dbReference type="EC" id="2.7.1.137"/>
    </reaction>
    <physiologicalReaction direction="left-to-right" evidence="1">
        <dbReference type="Rhea" id="RHEA:12710"/>
    </physiologicalReaction>
</comment>
<comment type="catalytic activity">
    <reaction evidence="1">
        <text>a 1,2-diacyl-sn-glycero-3-phospho-(1D-myo-inositol-4,5-bisphosphate) + ATP = a 1,2-diacyl-sn-glycero-3-phospho-(1D-myo-inositol-3,4,5-trisphosphate) + ADP + H(+)</text>
        <dbReference type="Rhea" id="RHEA:21292"/>
        <dbReference type="ChEBI" id="CHEBI:15378"/>
        <dbReference type="ChEBI" id="CHEBI:30616"/>
        <dbReference type="ChEBI" id="CHEBI:57836"/>
        <dbReference type="ChEBI" id="CHEBI:58456"/>
        <dbReference type="ChEBI" id="CHEBI:456216"/>
        <dbReference type="EC" id="2.7.1.153"/>
    </reaction>
    <physiologicalReaction direction="left-to-right" evidence="1">
        <dbReference type="Rhea" id="RHEA:21293"/>
    </physiologicalReaction>
</comment>
<comment type="cofactor">
    <cofactor evidence="1">
        <name>Ca(2+)</name>
        <dbReference type="ChEBI" id="CHEBI:29108"/>
    </cofactor>
    <cofactor evidence="1">
        <name>Mg(2+)</name>
        <dbReference type="ChEBI" id="CHEBI:18420"/>
    </cofactor>
    <text evidence="1">Ca(2+) or Mg(2+). Mn(2+) cannot be used.</text>
</comment>
<comment type="activity regulation">
    <text evidence="1 2">Only slightly inhibited by wortmannin and LY294002. Activated by clathrin and insulin (By similarity).</text>
</comment>
<comment type="subunit">
    <text evidence="1 2">Part of a complex with ERBB2 and EGFR (By similarity). Interacts with clathrin trimers (By similarity). Interacts with SBF2/MTMR13 (By similarity).</text>
</comment>
<comment type="subcellular location">
    <subcellularLocation>
        <location evidence="1">Cell membrane</location>
    </subcellularLocation>
    <subcellularLocation>
        <location evidence="1">Cytoplasmic vesicle</location>
        <location evidence="1">Clathrin-coated vesicle</location>
    </subcellularLocation>
    <subcellularLocation>
        <location evidence="1">Nucleus</location>
    </subcellularLocation>
    <subcellularLocation>
        <location evidence="1">Cytoplasm</location>
    </subcellularLocation>
    <subcellularLocation>
        <location evidence="1">Golgi apparatus</location>
        <location evidence="1">trans-Golgi network</location>
    </subcellularLocation>
    <text evidence="1">Inserts preferentially into membranes containing PtdIns(4,5)P2. Associated with RNA-containing structures.</text>
</comment>
<comment type="PTM">
    <text evidence="1 2">Phosphorylated on Ser-259 during mitosis and upon UV irradiation; which does not change enzymatic activity but leads to proteasomal degradation. Phosphorylated upon insulin stimulation; which may lead to enzyme activation (By similarity).</text>
</comment>
<comment type="similarity">
    <text evidence="7 8">Belongs to the PI3/PI4-kinase family.</text>
</comment>
<sequence>MAQISSNSGFKECPSSHPEPTRAKDVDKEEALQMEAEALAKLQKDRQVTDNQRGFELSSSTRKKAQVYNKQDYDLMVFPESDSQKRALDIDVEKLTQAELEKLLLDDSLETRKTPVLPVTPILSPSFSAQLYFRPTIQRGQWPPGLSGPSTYALPSIYPSTYSKQAAFQNGFNPRMPTFPSTEPIYLSLPGQSPYFSYPLTPATPFHPQGSLPIYRPVVSPDMAKLFDKIASTSEFLKNGKARADLEITDSKVSNLQVSPKSEDISKFDWLDLDPLSKPKVDNVEVLDHEEEKNVSSLLAKDPWDAVLLEERSTANCHLERKMNGKSLSVATVTRSQSLNIRTTQLAKAHISQKDPNGTSSLPTGSSLLQEVEVQNEEMAAFSRSITKLKTKFPYTNHHTNPGYLLSPVTAQRNICGENASVKVSIDIEGFQLPVTFTCDVSSTVEIIIMQALCWVHDDLNQVDVGSYVLKVCGQEEVLQNNHCLGSHEHIQNCRKWDTEIRLQLLTFSAMCQNLARTAEDDETPVDLNKHLYQIEKPYKEAMTRHPVEELLDSYHNQVELALQIENQHRAVDQVIKAVRKICSALDGVETLAITESVKKLKRAVNLPRSKTADVASLFGGEDTSKSSTRGSLNPENPVQVSINQLTAAIYDLLRLHANSGRSPTDCAQSSKSVKEAWTTTEQLQFTIFAAHGISSNWVSNYEKYYLICSLSHNGKDLFKPIQSKKVGTYKNFFYLIKWDELIIFPIQISQLPLESLLHLTLFGILNQSSGSSPDSNKQRKGPEALGKVSLPLFDFKRFLTCGTKLLYLWTSSHTNSVPGAVTKKGYVMERIVLQVDFPSPAFDIIYTTPQVDRSIIQQHNLETLENDVKGKLLDILHKDSSLGLSKEDKAFLWEKRYYCFKHPNCLPKILASAPNWKWVNLAKTYSLLHQWPALYPLIALELLDSKFADQEVRSLAVTWIEAISDDELTDLLPQFVQALKYEIYLNSSLVQFLLSRALGNIQIAHNLYWLLKDALHDVQFSTRYEHVLGALLSVGGKRLREELRKQTKLVQLLGGVAEKVRQASGSARQVVLQRSMERVQSFFQKNKCRLPLKPSLVAKELSIKSCSFFSSNAVPLKVTMVNADPMGEEINVMFKVGEDLRQDMLALQMIKIMDKIWLKEGLDLRMVIFKCLSTGRDRGMVELVPASDTLRKIQVEYGVTGSFKDKPLAEWLRKYNPSEEEYEKASENFIYSCAGCCVATYVLGICDRHNDNIMLRSTGHMFHIDFGKFLGHAQMFGTFKRDRAPFVLTSDMAYVINGGEKPTIRFQLFVDLCCQAYNLIRKQTNLFLNLLSLMIPSGLPELTSIQDLKYVRDALQPQTTDAEATIFFTRLIESSLGSIATKFNFLIHNLAQLRFSGLPSNDEPILSFSPKTYSFKQDGRIKEVSVFTYHKKYNPDKHYIYVVRILREGQIEPSFVFRTFDEFQELHNKLSIIFPLWKLPGFPNRMVLGRTHIKDVAAKRKIELNSYLQSLMNASTDVAECDLVCTFFHPLLRDEKAEGIARSADAGSFSPPTPGQIGGAVKLSISYRNGTLFIMVMHTKDLVTEDGADPNPYVKTYLLPDNHKTSKRKTKISRKTRNPTFNEMLVYSGYSKETLRQRELQLSVLSAESLRENFFLGGVTLPLKDFNLSKETVKWYQLTAATYL</sequence>
<dbReference type="EC" id="2.7.1.137" evidence="1"/>
<dbReference type="EC" id="2.7.1.153" evidence="1"/>
<dbReference type="EC" id="2.7.1.154" evidence="1"/>
<dbReference type="EMBL" id="CR858880">
    <property type="protein sequence ID" value="CAH91079.1"/>
    <property type="molecule type" value="mRNA"/>
</dbReference>
<dbReference type="RefSeq" id="NP_001125626.1">
    <property type="nucleotide sequence ID" value="NM_001132154.1"/>
</dbReference>
<dbReference type="SMR" id="Q5RAY1"/>
<dbReference type="FunCoup" id="Q5RAY1">
    <property type="interactions" value="3668"/>
</dbReference>
<dbReference type="STRING" id="9601.ENSPPYP00000003968"/>
<dbReference type="GeneID" id="100457125"/>
<dbReference type="KEGG" id="pon:100457125"/>
<dbReference type="CTD" id="5286"/>
<dbReference type="eggNOG" id="KOG0905">
    <property type="taxonomic scope" value="Eukaryota"/>
</dbReference>
<dbReference type="InParanoid" id="Q5RAY1"/>
<dbReference type="OrthoDB" id="67688at2759"/>
<dbReference type="Proteomes" id="UP000001595">
    <property type="component" value="Unplaced"/>
</dbReference>
<dbReference type="GO" id="GO:0030136">
    <property type="term" value="C:clathrin-coated vesicle"/>
    <property type="evidence" value="ECO:0000250"/>
    <property type="project" value="UniProtKB"/>
</dbReference>
<dbReference type="GO" id="GO:0005737">
    <property type="term" value="C:cytoplasm"/>
    <property type="evidence" value="ECO:0000250"/>
    <property type="project" value="UniProtKB"/>
</dbReference>
<dbReference type="GO" id="GO:0005634">
    <property type="term" value="C:nucleus"/>
    <property type="evidence" value="ECO:0007669"/>
    <property type="project" value="UniProtKB-SubCell"/>
</dbReference>
<dbReference type="GO" id="GO:0005942">
    <property type="term" value="C:phosphatidylinositol 3-kinase complex"/>
    <property type="evidence" value="ECO:0007669"/>
    <property type="project" value="TreeGrafter"/>
</dbReference>
<dbReference type="GO" id="GO:0005886">
    <property type="term" value="C:plasma membrane"/>
    <property type="evidence" value="ECO:0000250"/>
    <property type="project" value="UniProtKB"/>
</dbReference>
<dbReference type="GO" id="GO:0005802">
    <property type="term" value="C:trans-Golgi network"/>
    <property type="evidence" value="ECO:0000250"/>
    <property type="project" value="UniProtKB"/>
</dbReference>
<dbReference type="GO" id="GO:0031982">
    <property type="term" value="C:vesicle"/>
    <property type="evidence" value="ECO:0000250"/>
    <property type="project" value="UniProtKB"/>
</dbReference>
<dbReference type="GO" id="GO:0016303">
    <property type="term" value="F:1-phosphatidylinositol-3-kinase activity"/>
    <property type="evidence" value="ECO:0000250"/>
    <property type="project" value="UniProtKB"/>
</dbReference>
<dbReference type="GO" id="GO:0046934">
    <property type="term" value="F:1-phosphatidylinositol-4,5-bisphosphate 3-kinase activity"/>
    <property type="evidence" value="ECO:0000250"/>
    <property type="project" value="UniProtKB"/>
</dbReference>
<dbReference type="GO" id="GO:0035005">
    <property type="term" value="F:1-phosphatidylinositol-4-phosphate 3-kinase activity"/>
    <property type="evidence" value="ECO:0000250"/>
    <property type="project" value="UniProtKB"/>
</dbReference>
<dbReference type="GO" id="GO:0005524">
    <property type="term" value="F:ATP binding"/>
    <property type="evidence" value="ECO:0007669"/>
    <property type="project" value="UniProtKB-KW"/>
</dbReference>
<dbReference type="GO" id="GO:0030276">
    <property type="term" value="F:clathrin binding"/>
    <property type="evidence" value="ECO:0000250"/>
    <property type="project" value="UniProtKB"/>
</dbReference>
<dbReference type="GO" id="GO:0035091">
    <property type="term" value="F:phosphatidylinositol binding"/>
    <property type="evidence" value="ECO:0007669"/>
    <property type="project" value="InterPro"/>
</dbReference>
<dbReference type="GO" id="GO:0016477">
    <property type="term" value="P:cell migration"/>
    <property type="evidence" value="ECO:0007669"/>
    <property type="project" value="TreeGrafter"/>
</dbReference>
<dbReference type="GO" id="GO:0006897">
    <property type="term" value="P:endocytosis"/>
    <property type="evidence" value="ECO:0000250"/>
    <property type="project" value="UniProtKB"/>
</dbReference>
<dbReference type="GO" id="GO:0006887">
    <property type="term" value="P:exocytosis"/>
    <property type="evidence" value="ECO:0007669"/>
    <property type="project" value="UniProtKB-KW"/>
</dbReference>
<dbReference type="GO" id="GO:0043491">
    <property type="term" value="P:phosphatidylinositol 3-kinase/protein kinase B signal transduction"/>
    <property type="evidence" value="ECO:0007669"/>
    <property type="project" value="TreeGrafter"/>
</dbReference>
<dbReference type="GO" id="GO:0048015">
    <property type="term" value="P:phosphatidylinositol-mediated signaling"/>
    <property type="evidence" value="ECO:0007669"/>
    <property type="project" value="TreeGrafter"/>
</dbReference>
<dbReference type="CDD" id="cd04012">
    <property type="entry name" value="C2A_PI3K_class_II"/>
    <property type="match status" value="1"/>
</dbReference>
<dbReference type="CDD" id="cd08381">
    <property type="entry name" value="C2B_PI3K_class_II"/>
    <property type="match status" value="1"/>
</dbReference>
<dbReference type="CDD" id="cd00869">
    <property type="entry name" value="PI3Ka_II"/>
    <property type="match status" value="1"/>
</dbReference>
<dbReference type="CDD" id="cd05176">
    <property type="entry name" value="PI3Kc_C2_alpha"/>
    <property type="match status" value="1"/>
</dbReference>
<dbReference type="CDD" id="cd07289">
    <property type="entry name" value="PX_PI3K_C2_alpha"/>
    <property type="match status" value="1"/>
</dbReference>
<dbReference type="FunFam" id="2.60.40.150:FF:000116">
    <property type="entry name" value="Phosphatidylinositol 4-phosphate 3-kinase C2 domain-containing subunit alpha"/>
    <property type="match status" value="1"/>
</dbReference>
<dbReference type="FunFam" id="3.10.20.90:FF:000156">
    <property type="entry name" value="Phosphatidylinositol 4-phosphate 3-kinase C2 domain-containing subunit alpha"/>
    <property type="match status" value="1"/>
</dbReference>
<dbReference type="FunFam" id="3.30.1520.10:FF:000006">
    <property type="entry name" value="Phosphatidylinositol 4-phosphate 3-kinase C2 domain-containing subunit alpha"/>
    <property type="match status" value="1"/>
</dbReference>
<dbReference type="FunFam" id="1.25.40.70:FF:000007">
    <property type="entry name" value="phosphatidylinositol 4-phosphate 3-kinase C2 domain-containing subunit alpha"/>
    <property type="match status" value="1"/>
</dbReference>
<dbReference type="FunFam" id="1.10.1070.11:FF:000003">
    <property type="entry name" value="Phosphatidylinositol 4-phosphate 3-kinase C2 domain-containing subunit beta"/>
    <property type="match status" value="1"/>
</dbReference>
<dbReference type="FunFam" id="3.30.1010.10:FF:000001">
    <property type="entry name" value="Phosphatidylinositol 4-phosphate 3-kinase C2 domain-containing subunit beta"/>
    <property type="match status" value="1"/>
</dbReference>
<dbReference type="FunFam" id="2.60.40.150:FF:000036">
    <property type="entry name" value="phosphatidylinositol 4-phosphate 3-kinase C2 domain-containing subunit beta"/>
    <property type="match status" value="1"/>
</dbReference>
<dbReference type="Gene3D" id="2.60.40.150">
    <property type="entry name" value="C2 domain"/>
    <property type="match status" value="2"/>
</dbReference>
<dbReference type="Gene3D" id="1.10.1070.11">
    <property type="entry name" value="Phosphatidylinositol 3-/4-kinase, catalytic domain"/>
    <property type="match status" value="1"/>
</dbReference>
<dbReference type="Gene3D" id="3.10.20.90">
    <property type="entry name" value="Phosphatidylinositol 3-kinase Catalytic Subunit, Chain A, domain 1"/>
    <property type="match status" value="1"/>
</dbReference>
<dbReference type="Gene3D" id="3.30.1010.10">
    <property type="entry name" value="Phosphatidylinositol 3-kinase Catalytic Subunit, Chain A, domain 4"/>
    <property type="match status" value="1"/>
</dbReference>
<dbReference type="Gene3D" id="1.25.40.70">
    <property type="entry name" value="Phosphatidylinositol 3-kinase, accessory domain (PIK)"/>
    <property type="match status" value="1"/>
</dbReference>
<dbReference type="Gene3D" id="3.30.1520.10">
    <property type="entry name" value="Phox-like domain"/>
    <property type="match status" value="1"/>
</dbReference>
<dbReference type="InterPro" id="IPR016024">
    <property type="entry name" value="ARM-type_fold"/>
</dbReference>
<dbReference type="InterPro" id="IPR000008">
    <property type="entry name" value="C2_dom"/>
</dbReference>
<dbReference type="InterPro" id="IPR035892">
    <property type="entry name" value="C2_domain_sf"/>
</dbReference>
<dbReference type="InterPro" id="IPR011009">
    <property type="entry name" value="Kinase-like_dom_sf"/>
</dbReference>
<dbReference type="InterPro" id="IPR000403">
    <property type="entry name" value="PI3/4_kinase_cat_dom"/>
</dbReference>
<dbReference type="InterPro" id="IPR036940">
    <property type="entry name" value="PI3/4_kinase_cat_sf"/>
</dbReference>
<dbReference type="InterPro" id="IPR018936">
    <property type="entry name" value="PI3/4_kinase_CS"/>
</dbReference>
<dbReference type="InterPro" id="IPR037705">
    <property type="entry name" value="PI3K-C2-alpha_dom"/>
</dbReference>
<dbReference type="InterPro" id="IPR002420">
    <property type="entry name" value="PI3K-type_C2_dom"/>
</dbReference>
<dbReference type="InterPro" id="IPR001263">
    <property type="entry name" value="PI3K_accessory_dom"/>
</dbReference>
<dbReference type="InterPro" id="IPR042236">
    <property type="entry name" value="PI3K_accessory_sf"/>
</dbReference>
<dbReference type="InterPro" id="IPR000341">
    <property type="entry name" value="PI3K_Ras-bd_dom"/>
</dbReference>
<dbReference type="InterPro" id="IPR015433">
    <property type="entry name" value="PI_Kinase"/>
</dbReference>
<dbReference type="InterPro" id="IPR001683">
    <property type="entry name" value="PX_dom"/>
</dbReference>
<dbReference type="InterPro" id="IPR036871">
    <property type="entry name" value="PX_dom_sf"/>
</dbReference>
<dbReference type="InterPro" id="IPR042133">
    <property type="entry name" value="PX_PI3K_C2_alpha"/>
</dbReference>
<dbReference type="InterPro" id="IPR029071">
    <property type="entry name" value="Ubiquitin-like_domsf"/>
</dbReference>
<dbReference type="PANTHER" id="PTHR10048:SF28">
    <property type="entry name" value="PHOSPHATIDYLINOSITOL 4-PHOSPHATE 3-KINASE C2 DOMAIN-CONTAINING SUBUNIT ALPHA"/>
    <property type="match status" value="1"/>
</dbReference>
<dbReference type="PANTHER" id="PTHR10048">
    <property type="entry name" value="PHOSPHATIDYLINOSITOL KINASE"/>
    <property type="match status" value="1"/>
</dbReference>
<dbReference type="Pfam" id="PF00168">
    <property type="entry name" value="C2"/>
    <property type="match status" value="1"/>
</dbReference>
<dbReference type="Pfam" id="PF00454">
    <property type="entry name" value="PI3_PI4_kinase"/>
    <property type="match status" value="1"/>
</dbReference>
<dbReference type="Pfam" id="PF00792">
    <property type="entry name" value="PI3K_C2"/>
    <property type="match status" value="1"/>
</dbReference>
<dbReference type="Pfam" id="PF00794">
    <property type="entry name" value="PI3K_rbd"/>
    <property type="match status" value="1"/>
</dbReference>
<dbReference type="Pfam" id="PF00613">
    <property type="entry name" value="PI3Ka"/>
    <property type="match status" value="1"/>
</dbReference>
<dbReference type="Pfam" id="PF00787">
    <property type="entry name" value="PX"/>
    <property type="match status" value="1"/>
</dbReference>
<dbReference type="SMART" id="SM00239">
    <property type="entry name" value="C2"/>
    <property type="match status" value="2"/>
</dbReference>
<dbReference type="SMART" id="SM00142">
    <property type="entry name" value="PI3K_C2"/>
    <property type="match status" value="1"/>
</dbReference>
<dbReference type="SMART" id="SM00144">
    <property type="entry name" value="PI3K_rbd"/>
    <property type="match status" value="1"/>
</dbReference>
<dbReference type="SMART" id="SM00145">
    <property type="entry name" value="PI3Ka"/>
    <property type="match status" value="1"/>
</dbReference>
<dbReference type="SMART" id="SM00146">
    <property type="entry name" value="PI3Kc"/>
    <property type="match status" value="1"/>
</dbReference>
<dbReference type="SMART" id="SM00312">
    <property type="entry name" value="PX"/>
    <property type="match status" value="1"/>
</dbReference>
<dbReference type="SUPFAM" id="SSF48371">
    <property type="entry name" value="ARM repeat"/>
    <property type="match status" value="1"/>
</dbReference>
<dbReference type="SUPFAM" id="SSF49562">
    <property type="entry name" value="C2 domain (Calcium/lipid-binding domain, CaLB)"/>
    <property type="match status" value="2"/>
</dbReference>
<dbReference type="SUPFAM" id="SSF56112">
    <property type="entry name" value="Protein kinase-like (PK-like)"/>
    <property type="match status" value="1"/>
</dbReference>
<dbReference type="SUPFAM" id="SSF64268">
    <property type="entry name" value="PX domain"/>
    <property type="match status" value="1"/>
</dbReference>
<dbReference type="SUPFAM" id="SSF54236">
    <property type="entry name" value="Ubiquitin-like"/>
    <property type="match status" value="1"/>
</dbReference>
<dbReference type="PROSITE" id="PS50004">
    <property type="entry name" value="C2"/>
    <property type="match status" value="1"/>
</dbReference>
<dbReference type="PROSITE" id="PS51547">
    <property type="entry name" value="C2_PI3K"/>
    <property type="match status" value="1"/>
</dbReference>
<dbReference type="PROSITE" id="PS00915">
    <property type="entry name" value="PI3_4_KINASE_1"/>
    <property type="match status" value="1"/>
</dbReference>
<dbReference type="PROSITE" id="PS00916">
    <property type="entry name" value="PI3_4_KINASE_2"/>
    <property type="match status" value="1"/>
</dbReference>
<dbReference type="PROSITE" id="PS50290">
    <property type="entry name" value="PI3_4_KINASE_3"/>
    <property type="match status" value="1"/>
</dbReference>
<dbReference type="PROSITE" id="PS51546">
    <property type="entry name" value="PI3K_RBD"/>
    <property type="match status" value="1"/>
</dbReference>
<dbReference type="PROSITE" id="PS51545">
    <property type="entry name" value="PIK_HELICAL"/>
    <property type="match status" value="1"/>
</dbReference>
<dbReference type="PROSITE" id="PS50195">
    <property type="entry name" value="PX"/>
    <property type="match status" value="1"/>
</dbReference>
<accession>Q5RAY1</accession>
<protein>
    <recommendedName>
        <fullName>Phosphatidylinositol 4-phosphate 3-kinase C2 domain-containing subunit alpha</fullName>
        <shortName>PI3K-C2-alpha</shortName>
        <shortName>PtdIns-3-kinase C2 subunit alpha</shortName>
        <ecNumber evidence="1">2.7.1.137</ecNumber>
        <ecNumber evidence="1">2.7.1.153</ecNumber>
        <ecNumber evidence="1">2.7.1.154</ecNumber>
    </recommendedName>
    <alternativeName>
        <fullName>Phosphoinositide 3-kinase-C2-alpha</fullName>
    </alternativeName>
</protein>
<proteinExistence type="evidence at transcript level"/>
<keyword id="KW-0007">Acetylation</keyword>
<keyword id="KW-0067">ATP-binding</keyword>
<keyword id="KW-1003">Cell membrane</keyword>
<keyword id="KW-0963">Cytoplasm</keyword>
<keyword id="KW-0968">Cytoplasmic vesicle</keyword>
<keyword id="KW-0254">Endocytosis</keyword>
<keyword id="KW-0268">Exocytosis</keyword>
<keyword id="KW-0333">Golgi apparatus</keyword>
<keyword id="KW-0418">Kinase</keyword>
<keyword id="KW-0443">Lipid metabolism</keyword>
<keyword id="KW-0472">Membrane</keyword>
<keyword id="KW-0547">Nucleotide-binding</keyword>
<keyword id="KW-0539">Nucleus</keyword>
<keyword id="KW-0597">Phosphoprotein</keyword>
<keyword id="KW-1185">Reference proteome</keyword>
<keyword id="KW-0808">Transferase</keyword>
<gene>
    <name type="primary">PIK3C2A</name>
</gene>